<reference key="1">
    <citation type="journal article" date="2019" name="Fungal Genet. Biol.">
        <title>Identification of the gene cluster for bistropolone-humulene meroterpenoid biosynthesis in Phoma sp.</title>
        <authorList>
            <person name="Zhai Y."/>
            <person name="Li Y."/>
            <person name="Zhang J."/>
            <person name="Zhang Y."/>
            <person name="Ren F."/>
            <person name="Zhang X."/>
            <person name="Liu G."/>
            <person name="Liu X."/>
            <person name="Che Y."/>
        </authorList>
    </citation>
    <scope>NUCLEOTIDE SEQUENCE [GENOMIC DNA]</scope>
    <scope>FUNCTION</scope>
    <scope>DISRUPTION PHENOTYPE</scope>
    <scope>PATHWAY</scope>
    <source>
        <strain>XZ068 / CGMCC No. 10481</strain>
    </source>
</reference>
<reference key="2">
    <citation type="journal article" date="1993" name="J. Antibiot.">
        <title>Eupenifeldin, a novel cytotoxic bistropolone from Eupenicillium brefeldianum.</title>
        <authorList>
            <person name="Mayerl F."/>
            <person name="Gao Q."/>
            <person name="Huang S."/>
            <person name="Klohr S.E."/>
            <person name="Matson J.A."/>
            <person name="Gustavson D.R."/>
            <person name="Pirnik D.M."/>
            <person name="Berry R.L."/>
            <person name="Fairchild C."/>
            <person name="Rose W.C."/>
        </authorList>
    </citation>
    <scope>BIOTECHNOLOGY</scope>
</reference>
<reference key="3">
    <citation type="journal article" date="2008" name="J. Nat. Prod.">
        <title>Noreupenifeldin, a tropolone from an unidentified ascomycete.</title>
        <authorList>
            <person name="Ayers S."/>
            <person name="Zink D.L."/>
            <person name="Powell J.S."/>
            <person name="Brown C.M."/>
            <person name="Grund A."/>
            <person name="Bills G.F."/>
            <person name="Platas G."/>
            <person name="Thompson D."/>
            <person name="Singh S.B."/>
        </authorList>
    </citation>
    <scope>BIOTECHNOLOGY</scope>
</reference>
<reference key="4">
    <citation type="journal article" date="2008" name="Phytochem. Lett.">
        <title>Ramiferin, a bisphenol-sesquiterpene from the fungus Kionochaeta ramifera BCC 7585.</title>
        <authorList>
            <person name="Bunyapaiboonsri T."/>
            <person name="Veeranondha S."/>
            <person name="Boonruangprapa T."/>
            <person name="Somrithipol S."/>
        </authorList>
    </citation>
    <scope>BIOTECHNOLOGY</scope>
</reference>
<comment type="function">
    <text evidence="5 10">Short-chain dehydrogenase/reductase; part of the gene cluster that mediates the biosynthesis of eupenifeldin, a bistropolone meroterpenoid that acts as an antitumor agent (PubMed:30980906). The first step of eupenifeldin biosynthesis is the biosynthesis of 3-methylorcinaldehyde performed by the non-reducing polyketide synthase eupA (PubMed:30980906). Oxidative dearomatization of 3-methylorcinaldehyde likely catalyzed by the FAD-dependent monooxygenase eupB is followed by oxidative ring expansion by the 2-oxoglutarate-dependent dioxygenase eupC to provide the first tropolone metabolite, tropolone stipitaldehyde (Probable). In parallel, generation of sesquiterpene alpha-humulene from farnesylpyrophosphate (FPP) is catalyzed by the terpene cyclase eupE (PubMed:30980906). The cytochrome P450 monooxygenase eupD then hydroxylates humulene to humulenol (PubMed:30980906). The putative Diels-Alderase eupF probably catalyzes the formation of the tropolone-humulene skeleton by linking humulenol and the polyketide moiety (Probable). The short-chain dehydrogenase/reductase eupG and the flavin-dependent monooxygenase eupH are also essential for eupenifeldin biosynthesis and are likely the additional decorating enzymes of the tropolone-humulene skeleton to produce final eupenifeldin or derivatives (Probable).</text>
</comment>
<comment type="pathway">
    <text evidence="5">Secondary metabolite biosynthesis; terpenoid biosynthesis.</text>
</comment>
<comment type="disruption phenotype">
    <text evidence="5">Abolishes the production of eupenifeldin.</text>
</comment>
<comment type="biotechnology">
    <text evidence="4 6 7">Eupenifeldin is a bistropolone-humulene meroterpenoid first discovered as an antitumor and anti-leukemia agent (PubMed:8360103). This metabolite also shows anthelmintic activity against the parasitic worm Hemonchus contortus, anti-malarial activity as well as antifungal activity (PubMed:18095654, Ref.4).</text>
</comment>
<comment type="similarity">
    <text evidence="9">Belongs to the short-chain dehydrogenases/reductases (SDR) family.</text>
</comment>
<evidence type="ECO:0000250" key="1">
    <source>
        <dbReference type="UniProtKB" id="L0E2Z4"/>
    </source>
</evidence>
<evidence type="ECO:0000250" key="2">
    <source>
        <dbReference type="UniProtKB" id="O93868"/>
    </source>
</evidence>
<evidence type="ECO:0000255" key="3">
    <source>
        <dbReference type="PROSITE-ProRule" id="PRU10001"/>
    </source>
</evidence>
<evidence type="ECO:0000269" key="4">
    <source>
    </source>
</evidence>
<evidence type="ECO:0000269" key="5">
    <source>
    </source>
</evidence>
<evidence type="ECO:0000269" key="6">
    <source>
    </source>
</evidence>
<evidence type="ECO:0000269" key="7">
    <source ref="4"/>
</evidence>
<evidence type="ECO:0000303" key="8">
    <source>
    </source>
</evidence>
<evidence type="ECO:0000305" key="9"/>
<evidence type="ECO:0000305" key="10">
    <source>
    </source>
</evidence>
<gene>
    <name evidence="8" type="primary">eupG</name>
    <name type="ORF">gme12629</name>
</gene>
<sequence>MNSAGPKCVTLITGANTGLGFETAKALFARPEPYHILVGCRGQISRAEDAIEELQHLFPGTASTAQPLLIDISSDKSIALAFAEVQEEFGYLDIVVNNAGADLDTAVSSGRLTKREAWNQTWDVNVTGTQLFTETFAPLLLASKTQLPRLIFITSGLSSITEHANGSSPRYALAPAGWPKPDTLFLAYRSSKSGLNMIAAEWARVLRNDGVKVFNISPGFLDTGLGDDRASAERREKRALGAIDASVGGEFCANVVEGKLDEQSWPSKALRKNTVQPW</sequence>
<name>EUPG_PHOSX</name>
<organism>
    <name type="scientific">Phoma sp</name>
    <dbReference type="NCBI Taxonomy" id="1707701"/>
    <lineage>
        <taxon>Eukaryota</taxon>
        <taxon>Fungi</taxon>
        <taxon>Dikarya</taxon>
        <taxon>Ascomycota</taxon>
        <taxon>Pezizomycotina</taxon>
        <taxon>Dothideomycetes</taxon>
        <taxon>Pleosporomycetidae</taxon>
        <taxon>Pleosporales</taxon>
        <taxon>Pleosporineae</taxon>
        <taxon>Didymellaceae</taxon>
        <taxon>Phoma</taxon>
    </lineage>
</organism>
<accession>A0A4P8GEE8</accession>
<dbReference type="EC" id="1.1.1.-" evidence="10"/>
<dbReference type="EMBL" id="MK400120">
    <property type="protein sequence ID" value="QCO93107.1"/>
    <property type="molecule type" value="Genomic_DNA"/>
</dbReference>
<dbReference type="SMR" id="A0A4P8GEE8"/>
<dbReference type="UniPathway" id="UPA00213"/>
<dbReference type="GO" id="GO:0050664">
    <property type="term" value="F:oxidoreductase activity, acting on NAD(P)H, oxygen as acceptor"/>
    <property type="evidence" value="ECO:0007669"/>
    <property type="project" value="TreeGrafter"/>
</dbReference>
<dbReference type="GO" id="GO:0016616">
    <property type="term" value="F:oxidoreductase activity, acting on the CH-OH group of donors, NAD or NADP as acceptor"/>
    <property type="evidence" value="ECO:0007669"/>
    <property type="project" value="UniProtKB-ARBA"/>
</dbReference>
<dbReference type="GO" id="GO:0016114">
    <property type="term" value="P:terpenoid biosynthetic process"/>
    <property type="evidence" value="ECO:0007669"/>
    <property type="project" value="UniProtKB-UniPathway"/>
</dbReference>
<dbReference type="Gene3D" id="3.40.50.720">
    <property type="entry name" value="NAD(P)-binding Rossmann-like Domain"/>
    <property type="match status" value="1"/>
</dbReference>
<dbReference type="InterPro" id="IPR036291">
    <property type="entry name" value="NAD(P)-bd_dom_sf"/>
</dbReference>
<dbReference type="InterPro" id="IPR002347">
    <property type="entry name" value="SDR_fam"/>
</dbReference>
<dbReference type="PANTHER" id="PTHR43008">
    <property type="entry name" value="BENZIL REDUCTASE"/>
    <property type="match status" value="1"/>
</dbReference>
<dbReference type="PANTHER" id="PTHR43008:SF8">
    <property type="entry name" value="BENZIL REDUCTASE ((S)-BENZOIN FORMING) IRC24"/>
    <property type="match status" value="1"/>
</dbReference>
<dbReference type="Pfam" id="PF00106">
    <property type="entry name" value="adh_short"/>
    <property type="match status" value="1"/>
</dbReference>
<dbReference type="PRINTS" id="PR00081">
    <property type="entry name" value="GDHRDH"/>
</dbReference>
<dbReference type="SUPFAM" id="SSF51735">
    <property type="entry name" value="NAD(P)-binding Rossmann-fold domains"/>
    <property type="match status" value="1"/>
</dbReference>
<keyword id="KW-0521">NADP</keyword>
<keyword id="KW-0560">Oxidoreductase</keyword>
<protein>
    <recommendedName>
        <fullName evidence="8">Short-chain dehydrogenase/reductase eupG</fullName>
        <ecNumber evidence="10">1.1.1.-</ecNumber>
    </recommendedName>
    <alternativeName>
        <fullName evidence="8">Eupenifeldin biosynthesis cluster protein G</fullName>
    </alternativeName>
</protein>
<proteinExistence type="evidence at protein level"/>
<feature type="chain" id="PRO_0000449155" description="Short-chain dehydrogenase/reductase eupG">
    <location>
        <begin position="1"/>
        <end position="278"/>
    </location>
</feature>
<feature type="active site" description="Proton donor" evidence="2">
    <location>
        <position position="155"/>
    </location>
</feature>
<feature type="active site" description="Proton acceptor" evidence="3">
    <location>
        <position position="188"/>
    </location>
</feature>
<feature type="active site" description="Lowers pKa of active site Tyr" evidence="2">
    <location>
        <position position="192"/>
    </location>
</feature>
<feature type="binding site" evidence="1">
    <location>
        <position position="19"/>
    </location>
    <ligand>
        <name>NADP(+)</name>
        <dbReference type="ChEBI" id="CHEBI:58349"/>
    </ligand>
</feature>
<feature type="binding site" evidence="1">
    <location>
        <position position="71"/>
    </location>
    <ligand>
        <name>NADP(+)</name>
        <dbReference type="ChEBI" id="CHEBI:58349"/>
    </ligand>
</feature>
<feature type="binding site" evidence="2">
    <location>
        <position position="98"/>
    </location>
    <ligand>
        <name>NADP(+)</name>
        <dbReference type="ChEBI" id="CHEBI:58349"/>
    </ligand>
</feature>
<feature type="binding site" evidence="2">
    <location>
        <position position="188"/>
    </location>
    <ligand>
        <name>NADP(+)</name>
        <dbReference type="ChEBI" id="CHEBI:58349"/>
    </ligand>
</feature>
<feature type="binding site" evidence="2">
    <location>
        <position position="192"/>
    </location>
    <ligand>
        <name>NADP(+)</name>
        <dbReference type="ChEBI" id="CHEBI:58349"/>
    </ligand>
</feature>
<feature type="binding site" evidence="1">
    <location>
        <position position="223"/>
    </location>
    <ligand>
        <name>NADP(+)</name>
        <dbReference type="ChEBI" id="CHEBI:58349"/>
    </ligand>
</feature>